<sequence>MKNKLLQLVEQNQIRKDLPNFNTGDNVKVHLRIKEENKERIQIFEGLVIAKDGPGKGLSQSFKVRKISSGIGVEKDFPLNSPIISAIEVIRRNKVRRKKLYYIRNKSGKSARLKEKK</sequence>
<evidence type="ECO:0000255" key="1">
    <source>
        <dbReference type="HAMAP-Rule" id="MF_00402"/>
    </source>
</evidence>
<evidence type="ECO:0000305" key="2"/>
<feature type="chain" id="PRO_0000163493" description="Large ribosomal subunit protein bL19">
    <location>
        <begin position="1"/>
        <end position="117"/>
    </location>
</feature>
<organism>
    <name type="scientific">Mycoplasmopsis pulmonis (strain UAB CTIP)</name>
    <name type="common">Mycoplasma pulmonis</name>
    <dbReference type="NCBI Taxonomy" id="272635"/>
    <lineage>
        <taxon>Bacteria</taxon>
        <taxon>Bacillati</taxon>
        <taxon>Mycoplasmatota</taxon>
        <taxon>Mycoplasmoidales</taxon>
        <taxon>Metamycoplasmataceae</taxon>
        <taxon>Mycoplasmopsis</taxon>
    </lineage>
</organism>
<proteinExistence type="inferred from homology"/>
<name>RL19_MYCPU</name>
<protein>
    <recommendedName>
        <fullName evidence="1">Large ribosomal subunit protein bL19</fullName>
    </recommendedName>
    <alternativeName>
        <fullName evidence="2">50S ribosomal protein L19</fullName>
    </alternativeName>
</protein>
<keyword id="KW-1185">Reference proteome</keyword>
<keyword id="KW-0687">Ribonucleoprotein</keyword>
<keyword id="KW-0689">Ribosomal protein</keyword>
<accession>Q98Q99</accession>
<reference key="1">
    <citation type="journal article" date="2001" name="Nucleic Acids Res.">
        <title>The complete genome sequence of the murine respiratory pathogen Mycoplasma pulmonis.</title>
        <authorList>
            <person name="Chambaud I."/>
            <person name="Heilig R."/>
            <person name="Ferris S."/>
            <person name="Barbe V."/>
            <person name="Samson D."/>
            <person name="Galisson F."/>
            <person name="Moszer I."/>
            <person name="Dybvig K."/>
            <person name="Wroblewski H."/>
            <person name="Viari A."/>
            <person name="Rocha E.P.C."/>
            <person name="Blanchard A."/>
        </authorList>
    </citation>
    <scope>NUCLEOTIDE SEQUENCE [LARGE SCALE GENOMIC DNA]</scope>
    <source>
        <strain>UAB CTIP</strain>
    </source>
</reference>
<comment type="function">
    <text evidence="1">This protein is located at the 30S-50S ribosomal subunit interface and may play a role in the structure and function of the aminoacyl-tRNA binding site.</text>
</comment>
<comment type="similarity">
    <text evidence="1">Belongs to the bacterial ribosomal protein bL19 family.</text>
</comment>
<gene>
    <name evidence="1" type="primary">rplS</name>
    <name type="ordered locus">MYPU_4670</name>
</gene>
<dbReference type="EMBL" id="AL445564">
    <property type="protein sequence ID" value="CAC13640.1"/>
    <property type="molecule type" value="Genomic_DNA"/>
</dbReference>
<dbReference type="PIR" id="C90570">
    <property type="entry name" value="C90570"/>
</dbReference>
<dbReference type="RefSeq" id="WP_010925268.1">
    <property type="nucleotide sequence ID" value="NC_002771.1"/>
</dbReference>
<dbReference type="SMR" id="Q98Q99"/>
<dbReference type="STRING" id="272635.gene:17577068"/>
<dbReference type="KEGG" id="mpu:MYPU_4670"/>
<dbReference type="eggNOG" id="COG0335">
    <property type="taxonomic scope" value="Bacteria"/>
</dbReference>
<dbReference type="HOGENOM" id="CLU_103507_2_2_14"/>
<dbReference type="BioCyc" id="MPUL272635:G1GT6-471-MONOMER"/>
<dbReference type="Proteomes" id="UP000000528">
    <property type="component" value="Chromosome"/>
</dbReference>
<dbReference type="GO" id="GO:0022625">
    <property type="term" value="C:cytosolic large ribosomal subunit"/>
    <property type="evidence" value="ECO:0007669"/>
    <property type="project" value="TreeGrafter"/>
</dbReference>
<dbReference type="GO" id="GO:0003735">
    <property type="term" value="F:structural constituent of ribosome"/>
    <property type="evidence" value="ECO:0007669"/>
    <property type="project" value="InterPro"/>
</dbReference>
<dbReference type="GO" id="GO:0006412">
    <property type="term" value="P:translation"/>
    <property type="evidence" value="ECO:0007669"/>
    <property type="project" value="UniProtKB-UniRule"/>
</dbReference>
<dbReference type="Gene3D" id="2.30.30.790">
    <property type="match status" value="1"/>
</dbReference>
<dbReference type="HAMAP" id="MF_00402">
    <property type="entry name" value="Ribosomal_bL19"/>
    <property type="match status" value="1"/>
</dbReference>
<dbReference type="InterPro" id="IPR001857">
    <property type="entry name" value="Ribosomal_bL19"/>
</dbReference>
<dbReference type="InterPro" id="IPR018257">
    <property type="entry name" value="Ribosomal_bL19_CS"/>
</dbReference>
<dbReference type="InterPro" id="IPR038657">
    <property type="entry name" value="Ribosomal_bL19_sf"/>
</dbReference>
<dbReference type="InterPro" id="IPR008991">
    <property type="entry name" value="Translation_prot_SH3-like_sf"/>
</dbReference>
<dbReference type="NCBIfam" id="TIGR01024">
    <property type="entry name" value="rplS_bact"/>
    <property type="match status" value="1"/>
</dbReference>
<dbReference type="PANTHER" id="PTHR15680:SF9">
    <property type="entry name" value="LARGE RIBOSOMAL SUBUNIT PROTEIN BL19M"/>
    <property type="match status" value="1"/>
</dbReference>
<dbReference type="PANTHER" id="PTHR15680">
    <property type="entry name" value="RIBOSOMAL PROTEIN L19"/>
    <property type="match status" value="1"/>
</dbReference>
<dbReference type="Pfam" id="PF01245">
    <property type="entry name" value="Ribosomal_L19"/>
    <property type="match status" value="1"/>
</dbReference>
<dbReference type="PIRSF" id="PIRSF002191">
    <property type="entry name" value="Ribosomal_L19"/>
    <property type="match status" value="1"/>
</dbReference>
<dbReference type="PRINTS" id="PR00061">
    <property type="entry name" value="RIBOSOMALL19"/>
</dbReference>
<dbReference type="SUPFAM" id="SSF50104">
    <property type="entry name" value="Translation proteins SH3-like domain"/>
    <property type="match status" value="1"/>
</dbReference>
<dbReference type="PROSITE" id="PS01015">
    <property type="entry name" value="RIBOSOMAL_L19"/>
    <property type="match status" value="1"/>
</dbReference>